<comment type="function">
    <text evidence="1">Co-chaperone involved in the maturation of iron-sulfur cluster-containing proteins. Seems to help targeting proteins to be folded toward HscA.</text>
</comment>
<comment type="subunit">
    <text evidence="1">Interacts with HscA and stimulates its ATPase activity.</text>
</comment>
<comment type="similarity">
    <text evidence="1">Belongs to the HscB family.</text>
</comment>
<sequence length="170" mass="19563">MAADDHFSLFGLPTRFALDPVQLEQAWRAVAARVHPDRYATASAAERRVAMQWAARANEAYRQLRDPMLRARYLCEQAGVDLQTESNTAMDPAFLMQQMEWREMLDDARRDPAAFAALRAELEQARLRMQQTLSELIDERGDYQQAGTKVREWMFVEKLAQELSAAQPMQ</sequence>
<dbReference type="EMBL" id="BX640443">
    <property type="protein sequence ID" value="CAE32775.1"/>
    <property type="molecule type" value="Genomic_DNA"/>
</dbReference>
<dbReference type="RefSeq" id="WP_003812456.1">
    <property type="nucleotide sequence ID" value="NC_002927.3"/>
</dbReference>
<dbReference type="SMR" id="Q7WK60"/>
<dbReference type="GeneID" id="69602021"/>
<dbReference type="KEGG" id="bbr:BB2279"/>
<dbReference type="eggNOG" id="COG1076">
    <property type="taxonomic scope" value="Bacteria"/>
</dbReference>
<dbReference type="HOGENOM" id="CLU_068529_2_1_4"/>
<dbReference type="Proteomes" id="UP000001027">
    <property type="component" value="Chromosome"/>
</dbReference>
<dbReference type="GO" id="GO:1990230">
    <property type="term" value="C:iron-sulfur cluster transfer complex"/>
    <property type="evidence" value="ECO:0007669"/>
    <property type="project" value="TreeGrafter"/>
</dbReference>
<dbReference type="GO" id="GO:0001671">
    <property type="term" value="F:ATPase activator activity"/>
    <property type="evidence" value="ECO:0007669"/>
    <property type="project" value="InterPro"/>
</dbReference>
<dbReference type="GO" id="GO:0051087">
    <property type="term" value="F:protein-folding chaperone binding"/>
    <property type="evidence" value="ECO:0007669"/>
    <property type="project" value="InterPro"/>
</dbReference>
<dbReference type="GO" id="GO:0044571">
    <property type="term" value="P:[2Fe-2S] cluster assembly"/>
    <property type="evidence" value="ECO:0007669"/>
    <property type="project" value="InterPro"/>
</dbReference>
<dbReference type="GO" id="GO:0051259">
    <property type="term" value="P:protein complex oligomerization"/>
    <property type="evidence" value="ECO:0007669"/>
    <property type="project" value="InterPro"/>
</dbReference>
<dbReference type="GO" id="GO:0006457">
    <property type="term" value="P:protein folding"/>
    <property type="evidence" value="ECO:0007669"/>
    <property type="project" value="UniProtKB-UniRule"/>
</dbReference>
<dbReference type="CDD" id="cd06257">
    <property type="entry name" value="DnaJ"/>
    <property type="match status" value="1"/>
</dbReference>
<dbReference type="Gene3D" id="1.10.287.110">
    <property type="entry name" value="DnaJ domain"/>
    <property type="match status" value="1"/>
</dbReference>
<dbReference type="Gene3D" id="1.20.1280.20">
    <property type="entry name" value="HscB, C-terminal domain"/>
    <property type="match status" value="1"/>
</dbReference>
<dbReference type="HAMAP" id="MF_00682">
    <property type="entry name" value="HscB"/>
    <property type="match status" value="1"/>
</dbReference>
<dbReference type="InterPro" id="IPR001623">
    <property type="entry name" value="DnaJ_domain"/>
</dbReference>
<dbReference type="InterPro" id="IPR004640">
    <property type="entry name" value="HscB"/>
</dbReference>
<dbReference type="InterPro" id="IPR036386">
    <property type="entry name" value="HscB_C_sf"/>
</dbReference>
<dbReference type="InterPro" id="IPR009073">
    <property type="entry name" value="HscB_oligo_C"/>
</dbReference>
<dbReference type="InterPro" id="IPR036869">
    <property type="entry name" value="J_dom_sf"/>
</dbReference>
<dbReference type="NCBIfam" id="TIGR00714">
    <property type="entry name" value="hscB"/>
    <property type="match status" value="1"/>
</dbReference>
<dbReference type="NCBIfam" id="NF002935">
    <property type="entry name" value="PRK03578.1"/>
    <property type="match status" value="1"/>
</dbReference>
<dbReference type="PANTHER" id="PTHR14021">
    <property type="entry name" value="IRON-SULFUR CLUSTER CO-CHAPERONE PROTEIN HSCB"/>
    <property type="match status" value="1"/>
</dbReference>
<dbReference type="PANTHER" id="PTHR14021:SF15">
    <property type="entry name" value="IRON-SULFUR CLUSTER CO-CHAPERONE PROTEIN HSCB"/>
    <property type="match status" value="1"/>
</dbReference>
<dbReference type="Pfam" id="PF07743">
    <property type="entry name" value="HSCB_C"/>
    <property type="match status" value="1"/>
</dbReference>
<dbReference type="SMART" id="SM00271">
    <property type="entry name" value="DnaJ"/>
    <property type="match status" value="1"/>
</dbReference>
<dbReference type="SUPFAM" id="SSF46565">
    <property type="entry name" value="Chaperone J-domain"/>
    <property type="match status" value="1"/>
</dbReference>
<dbReference type="SUPFAM" id="SSF47144">
    <property type="entry name" value="HSC20 (HSCB), C-terminal oligomerisation domain"/>
    <property type="match status" value="1"/>
</dbReference>
<dbReference type="PROSITE" id="PS50076">
    <property type="entry name" value="DNAJ_2"/>
    <property type="match status" value="1"/>
</dbReference>
<evidence type="ECO:0000255" key="1">
    <source>
        <dbReference type="HAMAP-Rule" id="MF_00682"/>
    </source>
</evidence>
<reference key="1">
    <citation type="journal article" date="2003" name="Nat. Genet.">
        <title>Comparative analysis of the genome sequences of Bordetella pertussis, Bordetella parapertussis and Bordetella bronchiseptica.</title>
        <authorList>
            <person name="Parkhill J."/>
            <person name="Sebaihia M."/>
            <person name="Preston A."/>
            <person name="Murphy L.D."/>
            <person name="Thomson N.R."/>
            <person name="Harris D.E."/>
            <person name="Holden M.T.G."/>
            <person name="Churcher C.M."/>
            <person name="Bentley S.D."/>
            <person name="Mungall K.L."/>
            <person name="Cerdeno-Tarraga A.-M."/>
            <person name="Temple L."/>
            <person name="James K.D."/>
            <person name="Harris B."/>
            <person name="Quail M.A."/>
            <person name="Achtman M."/>
            <person name="Atkin R."/>
            <person name="Baker S."/>
            <person name="Basham D."/>
            <person name="Bason N."/>
            <person name="Cherevach I."/>
            <person name="Chillingworth T."/>
            <person name="Collins M."/>
            <person name="Cronin A."/>
            <person name="Davis P."/>
            <person name="Doggett J."/>
            <person name="Feltwell T."/>
            <person name="Goble A."/>
            <person name="Hamlin N."/>
            <person name="Hauser H."/>
            <person name="Holroyd S."/>
            <person name="Jagels K."/>
            <person name="Leather S."/>
            <person name="Moule S."/>
            <person name="Norberczak H."/>
            <person name="O'Neil S."/>
            <person name="Ormond D."/>
            <person name="Price C."/>
            <person name="Rabbinowitsch E."/>
            <person name="Rutter S."/>
            <person name="Sanders M."/>
            <person name="Saunders D."/>
            <person name="Seeger K."/>
            <person name="Sharp S."/>
            <person name="Simmonds M."/>
            <person name="Skelton J."/>
            <person name="Squares R."/>
            <person name="Squares S."/>
            <person name="Stevens K."/>
            <person name="Unwin L."/>
            <person name="Whitehead S."/>
            <person name="Barrell B.G."/>
            <person name="Maskell D.J."/>
        </authorList>
    </citation>
    <scope>NUCLEOTIDE SEQUENCE [LARGE SCALE GENOMIC DNA]</scope>
    <source>
        <strain>ATCC BAA-588 / NCTC 13252 / RB50</strain>
    </source>
</reference>
<gene>
    <name evidence="1" type="primary">hscB</name>
    <name type="ordered locus">BB2279</name>
</gene>
<protein>
    <recommendedName>
        <fullName evidence="1">Co-chaperone protein HscB homolog</fullName>
    </recommendedName>
</protein>
<accession>Q7WK60</accession>
<name>HSCB_BORBR</name>
<keyword id="KW-0143">Chaperone</keyword>
<proteinExistence type="inferred from homology"/>
<organism>
    <name type="scientific">Bordetella bronchiseptica (strain ATCC BAA-588 / NCTC 13252 / RB50)</name>
    <name type="common">Alcaligenes bronchisepticus</name>
    <dbReference type="NCBI Taxonomy" id="257310"/>
    <lineage>
        <taxon>Bacteria</taxon>
        <taxon>Pseudomonadati</taxon>
        <taxon>Pseudomonadota</taxon>
        <taxon>Betaproteobacteria</taxon>
        <taxon>Burkholderiales</taxon>
        <taxon>Alcaligenaceae</taxon>
        <taxon>Bordetella</taxon>
    </lineage>
</organism>
<feature type="chain" id="PRO_0000070957" description="Co-chaperone protein HscB homolog">
    <location>
        <begin position="1"/>
        <end position="170"/>
    </location>
</feature>
<feature type="domain" description="J" evidence="1">
    <location>
        <begin position="5"/>
        <end position="79"/>
    </location>
</feature>